<sequence>MTFELKHRDRSHLSHHFNAILGNPPVEWKISDHLVEYPEALRYMQERVEKILAKTAHEQVWLLEHPSLYTAGTSADKKDLLAPHLFPVYEAGRGGEFTYHGPGQRIAYIMLDLKRRKQDIRAFISALEEWIIQMLASFNIKGERREDRVGVWVKQSHCPSKKNDLSSEDKIAAIGIRVRKWISFHGVSINVNPNLAHYSGIVPCGITNHGVTSFLNLGCPVTMHDIDIALKHAFEKIFGPTIDVS</sequence>
<proteinExistence type="inferred from homology"/>
<organism>
    <name type="scientific">Bartonella tribocorum (strain CIP 105476 / IBS 506)</name>
    <dbReference type="NCBI Taxonomy" id="382640"/>
    <lineage>
        <taxon>Bacteria</taxon>
        <taxon>Pseudomonadati</taxon>
        <taxon>Pseudomonadota</taxon>
        <taxon>Alphaproteobacteria</taxon>
        <taxon>Hyphomicrobiales</taxon>
        <taxon>Bartonellaceae</taxon>
        <taxon>Bartonella</taxon>
    </lineage>
</organism>
<protein>
    <recommendedName>
        <fullName evidence="1">Octanoyltransferase</fullName>
        <ecNumber evidence="1">2.3.1.181</ecNumber>
    </recommendedName>
    <alternativeName>
        <fullName evidence="1">Lipoate-protein ligase B</fullName>
    </alternativeName>
    <alternativeName>
        <fullName evidence="1">Lipoyl/octanoyl transferase</fullName>
    </alternativeName>
    <alternativeName>
        <fullName evidence="1">Octanoyl-[acyl-carrier-protein]-protein N-octanoyltransferase</fullName>
    </alternativeName>
</protein>
<feature type="chain" id="PRO_1000073995" description="Octanoyltransferase">
    <location>
        <begin position="1"/>
        <end position="245"/>
    </location>
</feature>
<feature type="domain" description="BPL/LPL catalytic" evidence="2">
    <location>
        <begin position="54"/>
        <end position="242"/>
    </location>
</feature>
<feature type="active site" description="Acyl-thioester intermediate" evidence="1">
    <location>
        <position position="204"/>
    </location>
</feature>
<feature type="binding site" evidence="1">
    <location>
        <begin position="93"/>
        <end position="100"/>
    </location>
    <ligand>
        <name>substrate</name>
    </ligand>
</feature>
<feature type="binding site" evidence="1">
    <location>
        <begin position="173"/>
        <end position="175"/>
    </location>
    <ligand>
        <name>substrate</name>
    </ligand>
</feature>
<feature type="binding site" evidence="1">
    <location>
        <begin position="186"/>
        <end position="188"/>
    </location>
    <ligand>
        <name>substrate</name>
    </ligand>
</feature>
<feature type="site" description="Lowers pKa of active site Cys" evidence="1">
    <location>
        <position position="170"/>
    </location>
</feature>
<reference key="1">
    <citation type="journal article" date="2007" name="Nat. Genet.">
        <title>Genomic analysis of Bartonella identifies type IV secretion systems as host adaptability factors.</title>
        <authorList>
            <person name="Saenz H.L."/>
            <person name="Engel P."/>
            <person name="Stoeckli M.C."/>
            <person name="Lanz C."/>
            <person name="Raddatz G."/>
            <person name="Vayssier-Taussat M."/>
            <person name="Birtles R."/>
            <person name="Schuster S.C."/>
            <person name="Dehio C."/>
        </authorList>
    </citation>
    <scope>NUCLEOTIDE SEQUENCE [LARGE SCALE GENOMIC DNA]</scope>
    <source>
        <strain>CIP 105476 / IBS 506</strain>
    </source>
</reference>
<dbReference type="EC" id="2.3.1.181" evidence="1"/>
<dbReference type="EMBL" id="AM260525">
    <property type="protein sequence ID" value="CAK01821.1"/>
    <property type="molecule type" value="Genomic_DNA"/>
</dbReference>
<dbReference type="RefSeq" id="WP_012231961.1">
    <property type="nucleotide sequence ID" value="NC_010161.1"/>
</dbReference>
<dbReference type="SMR" id="A9IVX0"/>
<dbReference type="KEGG" id="btr:BT_1472"/>
<dbReference type="eggNOG" id="COG0321">
    <property type="taxonomic scope" value="Bacteria"/>
</dbReference>
<dbReference type="HOGENOM" id="CLU_035168_3_0_5"/>
<dbReference type="UniPathway" id="UPA00538">
    <property type="reaction ID" value="UER00592"/>
</dbReference>
<dbReference type="Proteomes" id="UP000001592">
    <property type="component" value="Chromosome"/>
</dbReference>
<dbReference type="GO" id="GO:0005737">
    <property type="term" value="C:cytoplasm"/>
    <property type="evidence" value="ECO:0007669"/>
    <property type="project" value="UniProtKB-SubCell"/>
</dbReference>
<dbReference type="GO" id="GO:0033819">
    <property type="term" value="F:lipoyl(octanoyl) transferase activity"/>
    <property type="evidence" value="ECO:0007669"/>
    <property type="project" value="UniProtKB-EC"/>
</dbReference>
<dbReference type="GO" id="GO:0036211">
    <property type="term" value="P:protein modification process"/>
    <property type="evidence" value="ECO:0007669"/>
    <property type="project" value="InterPro"/>
</dbReference>
<dbReference type="CDD" id="cd16444">
    <property type="entry name" value="LipB"/>
    <property type="match status" value="1"/>
</dbReference>
<dbReference type="Gene3D" id="3.30.930.10">
    <property type="entry name" value="Bira Bifunctional Protein, Domain 2"/>
    <property type="match status" value="1"/>
</dbReference>
<dbReference type="HAMAP" id="MF_00013">
    <property type="entry name" value="LipB"/>
    <property type="match status" value="1"/>
</dbReference>
<dbReference type="InterPro" id="IPR045864">
    <property type="entry name" value="aa-tRNA-synth_II/BPL/LPL"/>
</dbReference>
<dbReference type="InterPro" id="IPR004143">
    <property type="entry name" value="BPL_LPL_catalytic"/>
</dbReference>
<dbReference type="InterPro" id="IPR000544">
    <property type="entry name" value="Octanoyltransferase"/>
</dbReference>
<dbReference type="InterPro" id="IPR020605">
    <property type="entry name" value="Octanoyltransferase_CS"/>
</dbReference>
<dbReference type="NCBIfam" id="TIGR00214">
    <property type="entry name" value="lipB"/>
    <property type="match status" value="1"/>
</dbReference>
<dbReference type="NCBIfam" id="NF010921">
    <property type="entry name" value="PRK14341.1"/>
    <property type="match status" value="1"/>
</dbReference>
<dbReference type="NCBIfam" id="NF010925">
    <property type="entry name" value="PRK14345.1"/>
    <property type="match status" value="1"/>
</dbReference>
<dbReference type="PANTHER" id="PTHR10993:SF7">
    <property type="entry name" value="LIPOYLTRANSFERASE 2, MITOCHONDRIAL-RELATED"/>
    <property type="match status" value="1"/>
</dbReference>
<dbReference type="PANTHER" id="PTHR10993">
    <property type="entry name" value="OCTANOYLTRANSFERASE"/>
    <property type="match status" value="1"/>
</dbReference>
<dbReference type="Pfam" id="PF21948">
    <property type="entry name" value="LplA-B_cat"/>
    <property type="match status" value="1"/>
</dbReference>
<dbReference type="PIRSF" id="PIRSF016262">
    <property type="entry name" value="LPLase"/>
    <property type="match status" value="1"/>
</dbReference>
<dbReference type="SUPFAM" id="SSF55681">
    <property type="entry name" value="Class II aaRS and biotin synthetases"/>
    <property type="match status" value="1"/>
</dbReference>
<dbReference type="PROSITE" id="PS51733">
    <property type="entry name" value="BPL_LPL_CATALYTIC"/>
    <property type="match status" value="1"/>
</dbReference>
<dbReference type="PROSITE" id="PS01313">
    <property type="entry name" value="LIPB"/>
    <property type="match status" value="1"/>
</dbReference>
<accession>A9IVX0</accession>
<gene>
    <name evidence="1" type="primary">lipB</name>
    <name type="ordered locus">BT_1472</name>
</gene>
<comment type="function">
    <text evidence="1">Catalyzes the transfer of endogenously produced octanoic acid from octanoyl-acyl-carrier-protein onto the lipoyl domains of lipoate-dependent enzymes. Lipoyl-ACP can also act as a substrate although octanoyl-ACP is likely to be the physiological substrate.</text>
</comment>
<comment type="catalytic activity">
    <reaction evidence="1">
        <text>octanoyl-[ACP] + L-lysyl-[protein] = N(6)-octanoyl-L-lysyl-[protein] + holo-[ACP] + H(+)</text>
        <dbReference type="Rhea" id="RHEA:17665"/>
        <dbReference type="Rhea" id="RHEA-COMP:9636"/>
        <dbReference type="Rhea" id="RHEA-COMP:9685"/>
        <dbReference type="Rhea" id="RHEA-COMP:9752"/>
        <dbReference type="Rhea" id="RHEA-COMP:9928"/>
        <dbReference type="ChEBI" id="CHEBI:15378"/>
        <dbReference type="ChEBI" id="CHEBI:29969"/>
        <dbReference type="ChEBI" id="CHEBI:64479"/>
        <dbReference type="ChEBI" id="CHEBI:78463"/>
        <dbReference type="ChEBI" id="CHEBI:78809"/>
        <dbReference type="EC" id="2.3.1.181"/>
    </reaction>
</comment>
<comment type="pathway">
    <text evidence="1">Protein modification; protein lipoylation via endogenous pathway; protein N(6)-(lipoyl)lysine from octanoyl-[acyl-carrier-protein]: step 1/2.</text>
</comment>
<comment type="subcellular location">
    <subcellularLocation>
        <location evidence="1">Cytoplasm</location>
    </subcellularLocation>
</comment>
<comment type="miscellaneous">
    <text evidence="1">In the reaction, the free carboxyl group of octanoic acid is attached via an amide linkage to the epsilon-amino group of a specific lysine residue of lipoyl domains of lipoate-dependent enzymes.</text>
</comment>
<comment type="similarity">
    <text evidence="1">Belongs to the LipB family.</text>
</comment>
<name>LIPB_BART1</name>
<evidence type="ECO:0000255" key="1">
    <source>
        <dbReference type="HAMAP-Rule" id="MF_00013"/>
    </source>
</evidence>
<evidence type="ECO:0000255" key="2">
    <source>
        <dbReference type="PROSITE-ProRule" id="PRU01067"/>
    </source>
</evidence>
<keyword id="KW-0012">Acyltransferase</keyword>
<keyword id="KW-0963">Cytoplasm</keyword>
<keyword id="KW-0808">Transferase</keyword>